<name>PER2_BETPN</name>
<sequence length="13" mass="1288">VVSCADILAVAAR</sequence>
<keyword id="KW-0106">Calcium</keyword>
<keyword id="KW-0903">Direct protein sequencing</keyword>
<keyword id="KW-0349">Heme</keyword>
<keyword id="KW-0376">Hydrogen peroxide</keyword>
<keyword id="KW-0408">Iron</keyword>
<keyword id="KW-0479">Metal-binding</keyword>
<keyword id="KW-0560">Oxidoreductase</keyword>
<keyword id="KW-0575">Peroxidase</keyword>
<keyword id="KW-0964">Secreted</keyword>
<evidence type="ECO:0000250" key="1">
    <source>
        <dbReference type="UniProtKB" id="P84516"/>
    </source>
</evidence>
<evidence type="ECO:0000255" key="2">
    <source>
        <dbReference type="PROSITE-ProRule" id="PRU00297"/>
    </source>
</evidence>
<evidence type="ECO:0000305" key="3"/>
<accession>P85333</accession>
<proteinExistence type="evidence at protein level"/>
<organism>
    <name type="scientific">Betula pendula</name>
    <name type="common">European white birch</name>
    <name type="synonym">Betula verrucosa</name>
    <dbReference type="NCBI Taxonomy" id="3505"/>
    <lineage>
        <taxon>Eukaryota</taxon>
        <taxon>Viridiplantae</taxon>
        <taxon>Streptophyta</taxon>
        <taxon>Embryophyta</taxon>
        <taxon>Tracheophyta</taxon>
        <taxon>Spermatophyta</taxon>
        <taxon>Magnoliopsida</taxon>
        <taxon>eudicotyledons</taxon>
        <taxon>Gunneridae</taxon>
        <taxon>Pentapetalae</taxon>
        <taxon>rosids</taxon>
        <taxon>fabids</taxon>
        <taxon>Fagales</taxon>
        <taxon>Betulaceae</taxon>
        <taxon>Betula</taxon>
    </lineage>
</organism>
<protein>
    <recommendedName>
        <fullName>Peroxidase 2</fullName>
        <ecNumber>1.11.1.7</ecNumber>
    </recommendedName>
</protein>
<comment type="function">
    <text evidence="3">Removal of H(2)O(2), oxidation of toxic reductants, biosynthesis and degradation of lignin, suberization, auxin catabolism, response to environmental stresses such as wounding, pathogen attack and oxidative stress. These functions might be dependent on each isozyme/isoform in each plant tissue.</text>
</comment>
<comment type="catalytic activity">
    <reaction>
        <text>2 a phenolic donor + H2O2 = 2 a phenolic radical donor + 2 H2O</text>
        <dbReference type="Rhea" id="RHEA:56136"/>
        <dbReference type="ChEBI" id="CHEBI:15377"/>
        <dbReference type="ChEBI" id="CHEBI:16240"/>
        <dbReference type="ChEBI" id="CHEBI:139520"/>
        <dbReference type="ChEBI" id="CHEBI:139521"/>
        <dbReference type="EC" id="1.11.1.7"/>
    </reaction>
</comment>
<comment type="cofactor">
    <cofactor evidence="1 2">
        <name>Ca(2+)</name>
        <dbReference type="ChEBI" id="CHEBI:29108"/>
    </cofactor>
    <text evidence="1 2">Binds 2 calcium ions per subunit.</text>
</comment>
<comment type="cofactor">
    <cofactor evidence="1 2">
        <name>heme b</name>
        <dbReference type="ChEBI" id="CHEBI:60344"/>
    </cofactor>
    <text evidence="1 2">Binds 1 heme b (iron(II)-protoporphyrin IX) group per subunit.</text>
</comment>
<comment type="subcellular location">
    <subcellularLocation>
        <location evidence="1 2">Secreted</location>
    </subcellularLocation>
</comment>
<comment type="similarity">
    <text evidence="2">Belongs to the peroxidase family. Classical plant (class III) peroxidase subfamily.</text>
</comment>
<feature type="chain" id="PRO_0000314639" description="Peroxidase 2">
    <location>
        <begin position="1" status="less than"/>
        <end position="13" status="greater than"/>
    </location>
</feature>
<feature type="non-terminal residue">
    <location>
        <position position="1"/>
    </location>
</feature>
<feature type="non-terminal residue">
    <location>
        <position position="13"/>
    </location>
</feature>
<dbReference type="EC" id="1.11.1.7"/>
<dbReference type="GO" id="GO:0005576">
    <property type="term" value="C:extracellular region"/>
    <property type="evidence" value="ECO:0007669"/>
    <property type="project" value="UniProtKB-SubCell"/>
</dbReference>
<dbReference type="GO" id="GO:0140825">
    <property type="term" value="F:lactoperoxidase activity"/>
    <property type="evidence" value="ECO:0007669"/>
    <property type="project" value="UniProtKB-EC"/>
</dbReference>
<dbReference type="GO" id="GO:0046872">
    <property type="term" value="F:metal ion binding"/>
    <property type="evidence" value="ECO:0007669"/>
    <property type="project" value="UniProtKB-KW"/>
</dbReference>
<dbReference type="GO" id="GO:0042744">
    <property type="term" value="P:hydrogen peroxide catabolic process"/>
    <property type="evidence" value="ECO:0007669"/>
    <property type="project" value="UniProtKB-KW"/>
</dbReference>
<reference key="1">
    <citation type="journal article" date="2009" name="Physiol. Plantarum">
        <title>The presence of sinapyl lignin in Ginkgo biloba cell cultures changes our views of the evolution of lignin biosynthesis.</title>
        <authorList>
            <person name="Novo Uzal E."/>
            <person name="Gomez Ros L.V."/>
            <person name="Pomar F."/>
            <person name="Bernal M.A."/>
            <person name="Paradela A."/>
            <person name="Albar J.P."/>
            <person name="Ros Barcelo A."/>
        </authorList>
    </citation>
    <scope>PROTEIN SEQUENCE</scope>
    <source>
        <strain>PC-1121</strain>
        <tissue>Callus</tissue>
    </source>
</reference>